<protein>
    <recommendedName>
        <fullName>Eukaryotic translation initiation factor isoform 4G-1</fullName>
        <shortName>eIF(iso)4G-1</shortName>
    </recommendedName>
</protein>
<dbReference type="EMBL" id="AB013396">
    <property type="protein sequence ID" value="BAB08857.1"/>
    <property type="status" value="ALT_SEQ"/>
    <property type="molecule type" value="Genomic_DNA"/>
</dbReference>
<dbReference type="EMBL" id="CP002688">
    <property type="protein sequence ID" value="AED96964.1"/>
    <property type="molecule type" value="Genomic_DNA"/>
</dbReference>
<dbReference type="EMBL" id="CP002688">
    <property type="protein sequence ID" value="AED96965.1"/>
    <property type="molecule type" value="Genomic_DNA"/>
</dbReference>
<dbReference type="EMBL" id="AY056266">
    <property type="protein sequence ID" value="AAL07115.1"/>
    <property type="molecule type" value="mRNA"/>
</dbReference>
<dbReference type="EMBL" id="AY091258">
    <property type="protein sequence ID" value="AAM14197.1"/>
    <property type="molecule type" value="mRNA"/>
</dbReference>
<dbReference type="EMBL" id="BT000467">
    <property type="protein sequence ID" value="AAN17444.1"/>
    <property type="molecule type" value="mRNA"/>
</dbReference>
<dbReference type="EMBL" id="BT003424">
    <property type="protein sequence ID" value="AAO30087.1"/>
    <property type="molecule type" value="mRNA"/>
</dbReference>
<dbReference type="EMBL" id="BT002056">
    <property type="protein sequence ID" value="AAN72067.1"/>
    <property type="molecule type" value="mRNA"/>
</dbReference>
<dbReference type="RefSeq" id="NP_200595.2">
    <molecule id="Q93ZT6-2"/>
    <property type="nucleotide sequence ID" value="NM_125172.2"/>
</dbReference>
<dbReference type="RefSeq" id="NP_851207.1">
    <molecule id="Q93ZT6-1"/>
    <property type="nucleotide sequence ID" value="NM_180876.2"/>
</dbReference>
<dbReference type="SMR" id="Q93ZT6"/>
<dbReference type="BioGRID" id="21141">
    <property type="interactions" value="7"/>
</dbReference>
<dbReference type="FunCoup" id="Q93ZT6">
    <property type="interactions" value="3390"/>
</dbReference>
<dbReference type="IntAct" id="Q93ZT6">
    <property type="interactions" value="4"/>
</dbReference>
<dbReference type="STRING" id="3702.Q93ZT6"/>
<dbReference type="iPTMnet" id="Q93ZT6"/>
<dbReference type="PaxDb" id="3702-AT5G57870.1"/>
<dbReference type="ProteomicsDB" id="232186">
    <molecule id="Q93ZT6-1"/>
</dbReference>
<dbReference type="EnsemblPlants" id="AT5G57870.1">
    <molecule id="Q93ZT6-1"/>
    <property type="protein sequence ID" value="AT5G57870.1"/>
    <property type="gene ID" value="AT5G57870"/>
</dbReference>
<dbReference type="EnsemblPlants" id="AT5G57870.2">
    <molecule id="Q93ZT6-2"/>
    <property type="protein sequence ID" value="AT5G57870.2"/>
    <property type="gene ID" value="AT5G57870"/>
</dbReference>
<dbReference type="GeneID" id="835897"/>
<dbReference type="Gramene" id="AT5G57870.1">
    <molecule id="Q93ZT6-1"/>
    <property type="protein sequence ID" value="AT5G57870.1"/>
    <property type="gene ID" value="AT5G57870"/>
</dbReference>
<dbReference type="Gramene" id="AT5G57870.2">
    <molecule id="Q93ZT6-2"/>
    <property type="protein sequence ID" value="AT5G57870.2"/>
    <property type="gene ID" value="AT5G57870"/>
</dbReference>
<dbReference type="KEGG" id="ath:AT5G57870"/>
<dbReference type="Araport" id="AT5G57870"/>
<dbReference type="TAIR" id="AT5G57870">
    <property type="gene designation" value="EIFISO4G1"/>
</dbReference>
<dbReference type="eggNOG" id="KOG0401">
    <property type="taxonomic scope" value="Eukaryota"/>
</dbReference>
<dbReference type="InParanoid" id="Q93ZT6"/>
<dbReference type="OMA" id="PSKPAME"/>
<dbReference type="OrthoDB" id="514777at2759"/>
<dbReference type="PhylomeDB" id="Q93ZT6"/>
<dbReference type="PRO" id="PR:Q93ZT6"/>
<dbReference type="Proteomes" id="UP000006548">
    <property type="component" value="Chromosome 5"/>
</dbReference>
<dbReference type="ExpressionAtlas" id="Q93ZT6">
    <property type="expression patterns" value="baseline and differential"/>
</dbReference>
<dbReference type="GO" id="GO:0005737">
    <property type="term" value="C:cytoplasm"/>
    <property type="evidence" value="ECO:0007005"/>
    <property type="project" value="TAIR"/>
</dbReference>
<dbReference type="GO" id="GO:0005634">
    <property type="term" value="C:nucleus"/>
    <property type="evidence" value="ECO:0007005"/>
    <property type="project" value="TAIR"/>
</dbReference>
<dbReference type="GO" id="GO:0009536">
    <property type="term" value="C:plastid"/>
    <property type="evidence" value="ECO:0007005"/>
    <property type="project" value="TAIR"/>
</dbReference>
<dbReference type="GO" id="GO:0003729">
    <property type="term" value="F:mRNA binding"/>
    <property type="evidence" value="ECO:0000314"/>
    <property type="project" value="TAIR"/>
</dbReference>
<dbReference type="GO" id="GO:0003743">
    <property type="term" value="F:translation initiation factor activity"/>
    <property type="evidence" value="ECO:0007669"/>
    <property type="project" value="UniProtKB-KW"/>
</dbReference>
<dbReference type="GO" id="GO:0006417">
    <property type="term" value="P:regulation of translation"/>
    <property type="evidence" value="ECO:0007669"/>
    <property type="project" value="UniProtKB-KW"/>
</dbReference>
<dbReference type="FunFam" id="1.25.40.180:FF:000027">
    <property type="entry name" value="Eukaryotic translation initiation factor isoform 4G-2"/>
    <property type="match status" value="1"/>
</dbReference>
<dbReference type="Gene3D" id="1.25.40.180">
    <property type="match status" value="2"/>
</dbReference>
<dbReference type="InterPro" id="IPR016024">
    <property type="entry name" value="ARM-type_fold"/>
</dbReference>
<dbReference type="InterPro" id="IPR003891">
    <property type="entry name" value="Initiation_fac_eIF4g_MI"/>
</dbReference>
<dbReference type="InterPro" id="IPR003890">
    <property type="entry name" value="MIF4G-like_typ-3"/>
</dbReference>
<dbReference type="PANTHER" id="PTHR23253">
    <property type="entry name" value="EUKARYOTIC TRANSLATION INITIATION FACTOR 4 GAMMA"/>
    <property type="match status" value="1"/>
</dbReference>
<dbReference type="PANTHER" id="PTHR23253:SF53">
    <property type="entry name" value="EUKARYOTIC TRANSLATION INITIATION FACTOR ISOFORM 4G-1"/>
    <property type="match status" value="1"/>
</dbReference>
<dbReference type="Pfam" id="PF02847">
    <property type="entry name" value="MA3"/>
    <property type="match status" value="1"/>
</dbReference>
<dbReference type="Pfam" id="PF02854">
    <property type="entry name" value="MIF4G"/>
    <property type="match status" value="1"/>
</dbReference>
<dbReference type="SMART" id="SM00544">
    <property type="entry name" value="MA3"/>
    <property type="match status" value="1"/>
</dbReference>
<dbReference type="SMART" id="SM00543">
    <property type="entry name" value="MIF4G"/>
    <property type="match status" value="1"/>
</dbReference>
<dbReference type="SUPFAM" id="SSF48371">
    <property type="entry name" value="ARM repeat"/>
    <property type="match status" value="2"/>
</dbReference>
<dbReference type="PROSITE" id="PS51366">
    <property type="entry name" value="MI"/>
    <property type="match status" value="1"/>
</dbReference>
<keyword id="KW-0025">Alternative splicing</keyword>
<keyword id="KW-0396">Initiation factor</keyword>
<keyword id="KW-0648">Protein biosynthesis</keyword>
<keyword id="KW-1185">Reference proteome</keyword>
<keyword id="KW-0810">Translation regulation</keyword>
<accession>Q93ZT6</accession>
<accession>F4KDF4</accession>
<accession>Q8H0T8</accession>
<accession>Q8H179</accession>
<accession>Q9FJM7</accession>
<organism>
    <name type="scientific">Arabidopsis thaliana</name>
    <name type="common">Mouse-ear cress</name>
    <dbReference type="NCBI Taxonomy" id="3702"/>
    <lineage>
        <taxon>Eukaryota</taxon>
        <taxon>Viridiplantae</taxon>
        <taxon>Streptophyta</taxon>
        <taxon>Embryophyta</taxon>
        <taxon>Tracheophyta</taxon>
        <taxon>Spermatophyta</taxon>
        <taxon>Magnoliopsida</taxon>
        <taxon>eudicotyledons</taxon>
        <taxon>Gunneridae</taxon>
        <taxon>Pentapetalae</taxon>
        <taxon>rosids</taxon>
        <taxon>malvids</taxon>
        <taxon>Brassicales</taxon>
        <taxon>Brassicaceae</taxon>
        <taxon>Camelineae</taxon>
        <taxon>Arabidopsis</taxon>
    </lineage>
</organism>
<sequence>MQQGDQTVLSLRPGGGRGNRLFGSSSSSSSLSFGSLSSSDLPLLRPHGGAPASSFPFKGGDSRFDGRERVKYTREQLLELKETTQLSDEILRVQRETAAELFGEEGTWARGESVVSNLVPVQSASRFSEPDSRDWRSRSTQPPPSGEERSWDNLREAKDSRYVEASQYNRQDQPNSQFSRANISSNQGGGPAPVLVKAEVPWSARRGNLSENDRVLKTVKGILNKLTPEKYDLLKGQLIESGITSADILKGVITLIFDKAVLEPTFCPMYAKLCSDINDQLPTFPPAEPGDKEITFKRVLLNICQEAFEGASQLREELRQMSAPDQEAERNDKEKLLKLKTLGNIRLIGELLKQKMVPEKIVHHIVQELLGADEKVCPAEENVEAICHFFKTIGKQLDGNVKSKRINDVYFKRLQALSKNPQLELRLRFMVQNIIDMRSNGWVPRREEMKARTITEIHTEAEKNLGLRPGATANMRRGMVSSGGPVSPGPVYPGGRPGAGGLMPGMPGTRRMPGMPGVDNDNWEVPRTRSMSRRDGPGPLHSPAVSKSASMNTRLLPQGSSGIMSGKTSALLQGSGSVSRPVTVSAERPAQSVAPLTVPVPVEKPQPSGPKLSEEVLQRKTKSLLEEYFNVRLLGEALQCVEELGLPSYHPEFVKEAISLSLEKSPPVVEPIATLLEYLLSKKVVAPKDLETGFLLYGAMLDDIGIDLPKAPNNFGEIVGKLILAGGVDFKLVREIIGKMEDDRFQKMVVDAAVRIVESSEQGKSLLASQAADIEACRNL</sequence>
<reference key="1">
    <citation type="journal article" date="1998" name="DNA Res.">
        <title>Structural analysis of Arabidopsis thaliana chromosome 5. VI. Sequence features of the regions of 1,367,185 bp covered by 19 physically assigned P1 and TAC clones.</title>
        <authorList>
            <person name="Kotani H."/>
            <person name="Nakamura Y."/>
            <person name="Sato S."/>
            <person name="Asamizu E."/>
            <person name="Kaneko T."/>
            <person name="Miyajima N."/>
            <person name="Tabata S."/>
        </authorList>
    </citation>
    <scope>NUCLEOTIDE SEQUENCE [LARGE SCALE GENOMIC DNA]</scope>
    <source>
        <strain>cv. Columbia</strain>
    </source>
</reference>
<reference key="2">
    <citation type="journal article" date="2017" name="Plant J.">
        <title>Araport11: a complete reannotation of the Arabidopsis thaliana reference genome.</title>
        <authorList>
            <person name="Cheng C.Y."/>
            <person name="Krishnakumar V."/>
            <person name="Chan A.P."/>
            <person name="Thibaud-Nissen F."/>
            <person name="Schobel S."/>
            <person name="Town C.D."/>
        </authorList>
    </citation>
    <scope>GENOME REANNOTATION</scope>
    <source>
        <strain>cv. Columbia</strain>
    </source>
</reference>
<reference key="3">
    <citation type="journal article" date="2003" name="Science">
        <title>Empirical analysis of transcriptional activity in the Arabidopsis genome.</title>
        <authorList>
            <person name="Yamada K."/>
            <person name="Lim J."/>
            <person name="Dale J.M."/>
            <person name="Chen H."/>
            <person name="Shinn P."/>
            <person name="Palm C.J."/>
            <person name="Southwick A.M."/>
            <person name="Wu H.C."/>
            <person name="Kim C.J."/>
            <person name="Nguyen M."/>
            <person name="Pham P.K."/>
            <person name="Cheuk R.F."/>
            <person name="Karlin-Newmann G."/>
            <person name="Liu S.X."/>
            <person name="Lam B."/>
            <person name="Sakano H."/>
            <person name="Wu T."/>
            <person name="Yu G."/>
            <person name="Miranda M."/>
            <person name="Quach H.L."/>
            <person name="Tripp M."/>
            <person name="Chang C.H."/>
            <person name="Lee J.M."/>
            <person name="Toriumi M.J."/>
            <person name="Chan M.M."/>
            <person name="Tang C.C."/>
            <person name="Onodera C.S."/>
            <person name="Deng J.M."/>
            <person name="Akiyama K."/>
            <person name="Ansari Y."/>
            <person name="Arakawa T."/>
            <person name="Banh J."/>
            <person name="Banno F."/>
            <person name="Bowser L."/>
            <person name="Brooks S.Y."/>
            <person name="Carninci P."/>
            <person name="Chao Q."/>
            <person name="Choy N."/>
            <person name="Enju A."/>
            <person name="Goldsmith A.D."/>
            <person name="Gurjal M."/>
            <person name="Hansen N.F."/>
            <person name="Hayashizaki Y."/>
            <person name="Johnson-Hopson C."/>
            <person name="Hsuan V.W."/>
            <person name="Iida K."/>
            <person name="Karnes M."/>
            <person name="Khan S."/>
            <person name="Koesema E."/>
            <person name="Ishida J."/>
            <person name="Jiang P.X."/>
            <person name="Jones T."/>
            <person name="Kawai J."/>
            <person name="Kamiya A."/>
            <person name="Meyers C."/>
            <person name="Nakajima M."/>
            <person name="Narusaka M."/>
            <person name="Seki M."/>
            <person name="Sakurai T."/>
            <person name="Satou M."/>
            <person name="Tamse R."/>
            <person name="Vaysberg M."/>
            <person name="Wallender E.K."/>
            <person name="Wong C."/>
            <person name="Yamamura Y."/>
            <person name="Yuan S."/>
            <person name="Shinozaki K."/>
            <person name="Davis R.W."/>
            <person name="Theologis A."/>
            <person name="Ecker J.R."/>
        </authorList>
    </citation>
    <scope>NUCLEOTIDE SEQUENCE [LARGE SCALE MRNA] (ISOFORMS 1 AND 2)</scope>
    <source>
        <strain>cv. Columbia</strain>
    </source>
</reference>
<reference key="4">
    <citation type="journal article" date="2004" name="J. Virol.">
        <title>The Arabidopsis cucumovirus multiplication 1 and 2 loci encode translation initiation factors 4E and 4G.</title>
        <authorList>
            <person name="Yoshii M."/>
            <person name="Nishikiori M."/>
            <person name="Tomita K."/>
            <person name="Yoshioka N."/>
            <person name="Kozuka R."/>
            <person name="Naito S."/>
            <person name="Ishikawa M."/>
        </authorList>
    </citation>
    <scope>GENE FAMILY</scope>
</reference>
<reference key="5">
    <citation type="journal article" date="2006" name="Trends Plant Sci.">
        <title>Translation initiation factors: a weak link in plant RNA virus infection.</title>
        <authorList>
            <person name="Robaglia C."/>
            <person name="Caranta C."/>
        </authorList>
    </citation>
    <scope>REVIEW</scope>
    <scope>SUBUNIT</scope>
</reference>
<reference key="6">
    <citation type="journal article" date="2007" name="FEBS Lett.">
        <title>Coordinated and selective recruitment of eIF4E and eIF4G factors for potyvirus infection in Arabidopsis thaliana.</title>
        <authorList>
            <person name="Nicaise V."/>
            <person name="Gallois J.L."/>
            <person name="Chafiai F."/>
            <person name="Allen L.M."/>
            <person name="Schurdi-Levraud V."/>
            <person name="Browning K.S."/>
            <person name="Candresse T."/>
            <person name="Caranta C."/>
            <person name="Le Gall O."/>
            <person name="German-Retana S."/>
        </authorList>
    </citation>
    <scope>DISRUPTION PHENOTYPE</scope>
    <scope>FUNCTION</scope>
</reference>
<reference key="7">
    <citation type="journal article" date="2010" name="Plant Mol. Biol.">
        <title>Deletion of the eIFiso4G subunit of the Arabidopsis eIFiso4F translation initiation complex impairs health and viability.</title>
        <authorList>
            <person name="Lellis A.D."/>
            <person name="Allen M.L."/>
            <person name="Aertker A.W."/>
            <person name="Tran J.K."/>
            <person name="Hillis D.M."/>
            <person name="Harbin C.R."/>
            <person name="Caldwell C."/>
            <person name="Gallie D.R."/>
            <person name="Browning K.S."/>
        </authorList>
    </citation>
    <scope>DISRUPTION PHENOTYPE</scope>
</reference>
<feature type="chain" id="PRO_0000420542" description="Eukaryotic translation initiation factor isoform 4G-1">
    <location>
        <begin position="1"/>
        <end position="780"/>
    </location>
</feature>
<feature type="domain" description="MIF4G" evidence="1">
    <location>
        <begin position="216"/>
        <end position="440"/>
    </location>
</feature>
<feature type="domain" description="MI" evidence="1">
    <location>
        <begin position="616"/>
        <end position="738"/>
    </location>
</feature>
<feature type="region of interest" description="Disordered" evidence="2">
    <location>
        <begin position="1"/>
        <end position="68"/>
    </location>
</feature>
<feature type="region of interest" description="Disordered" evidence="2">
    <location>
        <begin position="125"/>
        <end position="154"/>
    </location>
</feature>
<feature type="region of interest" description="Disordered" evidence="2">
    <location>
        <begin position="166"/>
        <end position="194"/>
    </location>
</feature>
<feature type="region of interest" description="Disordered" evidence="2">
    <location>
        <begin position="529"/>
        <end position="549"/>
    </location>
</feature>
<feature type="compositionally biased region" description="Low complexity" evidence="2">
    <location>
        <begin position="19"/>
        <end position="45"/>
    </location>
</feature>
<feature type="compositionally biased region" description="Basic and acidic residues" evidence="2">
    <location>
        <begin position="128"/>
        <end position="137"/>
    </location>
</feature>
<feature type="compositionally biased region" description="Polar residues" evidence="2">
    <location>
        <begin position="166"/>
        <end position="186"/>
    </location>
</feature>
<feature type="splice variant" id="VSP_044532" description="In isoform 2." evidence="6">
    <location>
        <begin position="115"/>
        <end position="118"/>
    </location>
</feature>
<feature type="sequence conflict" description="In Ref. 3; AAN72067." evidence="7" ref="3">
    <original>S</original>
    <variation>T</variation>
    <location>
        <position position="546"/>
    </location>
</feature>
<feature type="sequence conflict" description="In Ref. 3; AAN17444/AAO30087." evidence="7" ref="3">
    <original>P</original>
    <variation>T</variation>
    <location>
        <position position="610"/>
    </location>
</feature>
<feature type="sequence conflict" description="In Ref. 3; AAN17444/AAO30087." evidence="7" ref="3">
    <original>L</original>
    <variation>I</variation>
    <location>
        <position position="690"/>
    </location>
</feature>
<evidence type="ECO:0000255" key="1">
    <source>
        <dbReference type="PROSITE-ProRule" id="PRU00698"/>
    </source>
</evidence>
<evidence type="ECO:0000256" key="2">
    <source>
        <dbReference type="SAM" id="MobiDB-lite"/>
    </source>
</evidence>
<evidence type="ECO:0000269" key="3">
    <source>
    </source>
</evidence>
<evidence type="ECO:0000269" key="4">
    <source>
    </source>
</evidence>
<evidence type="ECO:0000269" key="5">
    <source>
    </source>
</evidence>
<evidence type="ECO:0000303" key="6">
    <source>
    </source>
</evidence>
<evidence type="ECO:0000305" key="7"/>
<comment type="function">
    <text evidence="4">Plays a role in the accumulation of some potyvirus during viral infection.</text>
</comment>
<comment type="subunit">
    <text evidence="3">EIF4F is a multi-subunit complex, the composition of which varies with external and internal environmental conditions. It is composed of at least EIF4A, EIF4E and EIF4G. In higher plants two isoforms of EIF4F have been identified, named isoform EIF4F and isoform EIF(iso)4F. Isoform EIF4F has subunits p220 and p26, whereas isoform EIF(iso)4F has subunits p82 and p28.</text>
</comment>
<comment type="alternative products">
    <event type="alternative splicing"/>
    <isoform>
        <id>Q93ZT6-1</id>
        <name>1</name>
        <sequence type="displayed"/>
    </isoform>
    <isoform>
        <id>Q93ZT6-2</id>
        <name>2</name>
        <sequence type="described" ref="VSP_044532"/>
    </isoform>
</comment>
<comment type="disruption phenotype">
    <text evidence="4 5">Displays resistance to potyvirus (PPV or LMV) infection. I4g1/i4g2 double mutants show reduced germination rates, slow growth rates, moderate chlorosis, late flowering, impaired fertility and reduced long term seed viability. They also exhibit altered responses to dehydration, salinity, and heat stress. The i4g1 and i4g2 double mutant has reduced amounts of chlorophyll a and b.</text>
</comment>
<comment type="similarity">
    <text evidence="7">Belongs to the eukaryotic initiation factor 4G family.</text>
</comment>
<comment type="sequence caution" evidence="7">
    <conflict type="erroneous gene model prediction">
        <sequence resource="EMBL-CDS" id="BAB08857"/>
    </conflict>
</comment>
<proteinExistence type="evidence at protein level"/>
<name>IF4G1_ARATH</name>
<gene>
    <name type="primary">EIF(ISO)4G1</name>
    <name type="ordered locus">At5g57870</name>
    <name type="ORF">MTI20.13</name>
</gene>